<comment type="similarity">
    <text evidence="1">Belongs to the bacterial ribosomal protein bL34 family.</text>
</comment>
<gene>
    <name evidence="1" type="primary">rpmH</name>
    <name type="ordered locus">ACIAD3684</name>
</gene>
<proteinExistence type="inferred from homology"/>
<evidence type="ECO:0000255" key="1">
    <source>
        <dbReference type="HAMAP-Rule" id="MF_00391"/>
    </source>
</evidence>
<evidence type="ECO:0000256" key="2">
    <source>
        <dbReference type="SAM" id="MobiDB-lite"/>
    </source>
</evidence>
<evidence type="ECO:0000305" key="3"/>
<keyword id="KW-0687">Ribonucleoprotein</keyword>
<keyword id="KW-0689">Ribosomal protein</keyword>
<name>RL34_ACIAD</name>
<feature type="chain" id="PRO_0000187331" description="Large ribosomal subunit protein bL34">
    <location>
        <begin position="1"/>
        <end position="44"/>
    </location>
</feature>
<feature type="region of interest" description="Disordered" evidence="2">
    <location>
        <begin position="24"/>
        <end position="44"/>
    </location>
</feature>
<feature type="compositionally biased region" description="Basic residues" evidence="2">
    <location>
        <begin position="31"/>
        <end position="44"/>
    </location>
</feature>
<dbReference type="EMBL" id="CR543861">
    <property type="protein sequence ID" value="CAG70310.1"/>
    <property type="molecule type" value="Genomic_DNA"/>
</dbReference>
<dbReference type="RefSeq" id="WP_000831329.1">
    <property type="nucleotide sequence ID" value="NC_005966.1"/>
</dbReference>
<dbReference type="SMR" id="Q6F6K7"/>
<dbReference type="STRING" id="202950.GCA_001485005_03177"/>
<dbReference type="GeneID" id="97427695"/>
<dbReference type="KEGG" id="aci:ACIAD3684"/>
<dbReference type="eggNOG" id="COG0230">
    <property type="taxonomic scope" value="Bacteria"/>
</dbReference>
<dbReference type="HOGENOM" id="CLU_129938_2_0_6"/>
<dbReference type="OrthoDB" id="9804164at2"/>
<dbReference type="BioCyc" id="ASP62977:ACIAD_RS16655-MONOMER"/>
<dbReference type="Proteomes" id="UP000000430">
    <property type="component" value="Chromosome"/>
</dbReference>
<dbReference type="GO" id="GO:1990904">
    <property type="term" value="C:ribonucleoprotein complex"/>
    <property type="evidence" value="ECO:0007669"/>
    <property type="project" value="UniProtKB-KW"/>
</dbReference>
<dbReference type="GO" id="GO:0005840">
    <property type="term" value="C:ribosome"/>
    <property type="evidence" value="ECO:0007669"/>
    <property type="project" value="UniProtKB-KW"/>
</dbReference>
<dbReference type="GO" id="GO:0003735">
    <property type="term" value="F:structural constituent of ribosome"/>
    <property type="evidence" value="ECO:0007669"/>
    <property type="project" value="InterPro"/>
</dbReference>
<dbReference type="GO" id="GO:0006412">
    <property type="term" value="P:translation"/>
    <property type="evidence" value="ECO:0007669"/>
    <property type="project" value="UniProtKB-UniRule"/>
</dbReference>
<dbReference type="FunFam" id="1.10.287.3980:FF:000001">
    <property type="entry name" value="Mitochondrial ribosomal protein L34"/>
    <property type="match status" value="1"/>
</dbReference>
<dbReference type="Gene3D" id="1.10.287.3980">
    <property type="match status" value="1"/>
</dbReference>
<dbReference type="HAMAP" id="MF_00391">
    <property type="entry name" value="Ribosomal_bL34"/>
    <property type="match status" value="1"/>
</dbReference>
<dbReference type="InterPro" id="IPR000271">
    <property type="entry name" value="Ribosomal_bL34"/>
</dbReference>
<dbReference type="InterPro" id="IPR020939">
    <property type="entry name" value="Ribosomal_bL34_CS"/>
</dbReference>
<dbReference type="NCBIfam" id="TIGR01030">
    <property type="entry name" value="rpmH_bact"/>
    <property type="match status" value="1"/>
</dbReference>
<dbReference type="PANTHER" id="PTHR14503:SF4">
    <property type="entry name" value="LARGE RIBOSOMAL SUBUNIT PROTEIN BL34M"/>
    <property type="match status" value="1"/>
</dbReference>
<dbReference type="PANTHER" id="PTHR14503">
    <property type="entry name" value="MITOCHONDRIAL RIBOSOMAL PROTEIN 34 FAMILY MEMBER"/>
    <property type="match status" value="1"/>
</dbReference>
<dbReference type="Pfam" id="PF00468">
    <property type="entry name" value="Ribosomal_L34"/>
    <property type="match status" value="1"/>
</dbReference>
<dbReference type="PROSITE" id="PS00784">
    <property type="entry name" value="RIBOSOMAL_L34"/>
    <property type="match status" value="1"/>
</dbReference>
<accession>Q6F6K7</accession>
<sequence>MKRTFQPSELKRKRVHGFRARMATKAGRQVLARRRAKGRHSLTV</sequence>
<organism>
    <name type="scientific">Acinetobacter baylyi (strain ATCC 33305 / BD413 / ADP1)</name>
    <dbReference type="NCBI Taxonomy" id="62977"/>
    <lineage>
        <taxon>Bacteria</taxon>
        <taxon>Pseudomonadati</taxon>
        <taxon>Pseudomonadota</taxon>
        <taxon>Gammaproteobacteria</taxon>
        <taxon>Moraxellales</taxon>
        <taxon>Moraxellaceae</taxon>
        <taxon>Acinetobacter</taxon>
    </lineage>
</organism>
<protein>
    <recommendedName>
        <fullName evidence="1">Large ribosomal subunit protein bL34</fullName>
    </recommendedName>
    <alternativeName>
        <fullName evidence="3">50S ribosomal protein L34</fullName>
    </alternativeName>
</protein>
<reference key="1">
    <citation type="journal article" date="2004" name="Nucleic Acids Res.">
        <title>Unique features revealed by the genome sequence of Acinetobacter sp. ADP1, a versatile and naturally transformation competent bacterium.</title>
        <authorList>
            <person name="Barbe V."/>
            <person name="Vallenet D."/>
            <person name="Fonknechten N."/>
            <person name="Kreimeyer A."/>
            <person name="Oztas S."/>
            <person name="Labarre L."/>
            <person name="Cruveiller S."/>
            <person name="Robert C."/>
            <person name="Duprat S."/>
            <person name="Wincker P."/>
            <person name="Ornston L.N."/>
            <person name="Weissenbach J."/>
            <person name="Marliere P."/>
            <person name="Cohen G.N."/>
            <person name="Medigue C."/>
        </authorList>
    </citation>
    <scope>NUCLEOTIDE SEQUENCE [LARGE SCALE GENOMIC DNA]</scope>
    <source>
        <strain>ATCC 33305 / BD413 / ADP1</strain>
    </source>
</reference>